<evidence type="ECO:0000250" key="1">
    <source>
        <dbReference type="UniProtKB" id="P03433"/>
    </source>
</evidence>
<evidence type="ECO:0000255" key="2">
    <source>
        <dbReference type="HAMAP-Rule" id="MF_04063"/>
    </source>
</evidence>
<proteinExistence type="inferred from homology"/>
<dbReference type="EC" id="3.1.-.-" evidence="2"/>
<dbReference type="EMBL" id="CY014684">
    <property type="protein sequence ID" value="ABI84552.1"/>
    <property type="molecule type" value="Genomic_RNA"/>
</dbReference>
<dbReference type="SMR" id="Q0A430"/>
<dbReference type="Proteomes" id="UP000155465">
    <property type="component" value="Genome"/>
</dbReference>
<dbReference type="GO" id="GO:0030430">
    <property type="term" value="C:host cell cytoplasm"/>
    <property type="evidence" value="ECO:0007669"/>
    <property type="project" value="UniProtKB-SubCell"/>
</dbReference>
<dbReference type="GO" id="GO:0042025">
    <property type="term" value="C:host cell nucleus"/>
    <property type="evidence" value="ECO:0007669"/>
    <property type="project" value="UniProtKB-SubCell"/>
</dbReference>
<dbReference type="GO" id="GO:0004519">
    <property type="term" value="F:endonuclease activity"/>
    <property type="evidence" value="ECO:0007669"/>
    <property type="project" value="UniProtKB-KW"/>
</dbReference>
<dbReference type="GO" id="GO:0046872">
    <property type="term" value="F:metal ion binding"/>
    <property type="evidence" value="ECO:0007669"/>
    <property type="project" value="UniProtKB-KW"/>
</dbReference>
<dbReference type="GO" id="GO:0003723">
    <property type="term" value="F:RNA binding"/>
    <property type="evidence" value="ECO:0007669"/>
    <property type="project" value="UniProtKB-UniRule"/>
</dbReference>
<dbReference type="GO" id="GO:0075526">
    <property type="term" value="P:cap snatching"/>
    <property type="evidence" value="ECO:0007669"/>
    <property type="project" value="UniProtKB-UniRule"/>
</dbReference>
<dbReference type="GO" id="GO:0006351">
    <property type="term" value="P:DNA-templated transcription"/>
    <property type="evidence" value="ECO:0007669"/>
    <property type="project" value="UniProtKB-UniRule"/>
</dbReference>
<dbReference type="GO" id="GO:0039657">
    <property type="term" value="P:symbiont-mediated suppression of host gene expression"/>
    <property type="evidence" value="ECO:0007669"/>
    <property type="project" value="UniProtKB-KW"/>
</dbReference>
<dbReference type="GO" id="GO:0039523">
    <property type="term" value="P:symbiont-mediated suppression of host mRNA transcription via inhibition of RNA polymerase II activity"/>
    <property type="evidence" value="ECO:0007669"/>
    <property type="project" value="UniProtKB-UniRule"/>
</dbReference>
<dbReference type="GO" id="GO:0039694">
    <property type="term" value="P:viral RNA genome replication"/>
    <property type="evidence" value="ECO:0007669"/>
    <property type="project" value="InterPro"/>
</dbReference>
<dbReference type="GO" id="GO:0075523">
    <property type="term" value="P:viral translational frameshifting"/>
    <property type="evidence" value="ECO:0007669"/>
    <property type="project" value="UniProtKB-KW"/>
</dbReference>
<dbReference type="FunFam" id="3.40.91.90:FF:000001">
    <property type="entry name" value="Polymerase acidic protein"/>
    <property type="match status" value="1"/>
</dbReference>
<dbReference type="Gene3D" id="3.40.91.90">
    <property type="entry name" value="Influenza RNA-dependent RNA polymerase subunit PA, endonuclease domain"/>
    <property type="match status" value="1"/>
</dbReference>
<dbReference type="HAMAP" id="MF_04063">
    <property type="entry name" value="INFV_PA"/>
    <property type="match status" value="1"/>
</dbReference>
<dbReference type="InterPro" id="IPR037534">
    <property type="entry name" value="INFV_PA"/>
</dbReference>
<dbReference type="InterPro" id="IPR001009">
    <property type="entry name" value="PA/PA-X"/>
</dbReference>
<dbReference type="InterPro" id="IPR038372">
    <property type="entry name" value="PA/PA-X_sf"/>
</dbReference>
<dbReference type="Pfam" id="PF00603">
    <property type="entry name" value="Flu_PA"/>
    <property type="match status" value="1"/>
</dbReference>
<sequence length="716" mass="82394">MEDFVRQCFNPMIVELAEKAMKEYGEDPKIETNKFAAICTHLEVCFMYSDFHFIDERGESIIVEPGDPNALLKHRFEIIEGRDRTVAWTVVNSICNTTGVEKPKFLPDLYDYKENRFIEIGVTRREVHIYYLEKANKIKSEKTHIHIFSFTGEEMATKADYTLDEESRARIKTRLFTIRQEMASRGLWDSFRQSERGEETIEERFEITGAMRRLADQSLPPNFSSLENFRAYVDGFEPNGCIEGKLSQMSKEVNARIEPFLKTTPRPLRLPDGPPCSQRSKFLLMDALKLSIEDPSHEGEGIPLYDAIKCMKTFFGWKEPNIVKPHEKGINPNYLLAWKQVLAELQDIENGEKIPKTKNMKKTSQLKWALGENMAPEKVDFEDCKDVSDLKQYDSDEPEPRSLASWIQSEFNKACELTDSSWIELDEIGEDIAPIEHIASMRRNYFTAEVSHCRATEYIMKGVYINTALLNASCAAMDDFQLIPMISKCRTREGRRKTNLYGFIVKGRSHLRNDTDVVNFVSMEFSLTDPRLEPHKWEKYCVLEIGDMLLRTAIGQVSRPMFLYVRTNGTSKIKMKWGMEMRRCLLQSLQQIESMIEAESSVKEKDVTKEFFENKSETWPIGESPKGVEEGSIGKVCRTLLAKSVFNSLYASPQLEGFSAESRKLLLIVQALRDNLEPGTFDLGGLYEAIEECLINDPWVLLNASWFNSFLTHALK</sequence>
<name>PA_I56A2</name>
<organismHost>
    <name type="scientific">Aves</name>
    <dbReference type="NCBI Taxonomy" id="8782"/>
</organismHost>
<feature type="chain" id="PRO_0000279243" description="Polymerase acidic protein">
    <location>
        <begin position="1"/>
        <end position="716"/>
    </location>
</feature>
<feature type="short sequence motif" description="Nuclear localization signal 1 (NLS1)" evidence="1 2">
    <location>
        <begin position="124"/>
        <end position="139"/>
    </location>
</feature>
<feature type="short sequence motif" description="Nuclear localization signal 2 (NLS2)" evidence="1 2">
    <location>
        <begin position="184"/>
        <end position="247"/>
    </location>
</feature>
<feature type="binding site" evidence="2">
    <location>
        <position position="41"/>
    </location>
    <ligand>
        <name>Mn(2+)</name>
        <dbReference type="ChEBI" id="CHEBI:29035"/>
        <label>1</label>
    </ligand>
</feature>
<feature type="binding site" evidence="2">
    <location>
        <position position="80"/>
    </location>
    <ligand>
        <name>Mn(2+)</name>
        <dbReference type="ChEBI" id="CHEBI:29035"/>
        <label>2</label>
    </ligand>
</feature>
<feature type="binding site" evidence="2">
    <location>
        <position position="108"/>
    </location>
    <ligand>
        <name>Mn(2+)</name>
        <dbReference type="ChEBI" id="CHEBI:29035"/>
        <label>1</label>
    </ligand>
</feature>
<feature type="binding site" evidence="2">
    <location>
        <position position="108"/>
    </location>
    <ligand>
        <name>Mn(2+)</name>
        <dbReference type="ChEBI" id="CHEBI:29035"/>
        <label>2</label>
    </ligand>
</feature>
<feature type="binding site" evidence="2">
    <location>
        <position position="119"/>
    </location>
    <ligand>
        <name>Mn(2+)</name>
        <dbReference type="ChEBI" id="CHEBI:29035"/>
        <label>1</label>
    </ligand>
</feature>
<feature type="binding site" evidence="2">
    <location>
        <position position="120"/>
    </location>
    <ligand>
        <name>Mn(2+)</name>
        <dbReference type="ChEBI" id="CHEBI:29035"/>
        <label>1</label>
    </ligand>
</feature>
<accession>Q0A430</accession>
<comment type="function">
    <text evidence="2">Plays an essential role in viral RNA transcription and replication by forming the heterotrimeric polymerase complex together with PB1 and PB2 subunits. The complex transcribes viral mRNAs by using a unique mechanism called cap-snatching. It consists in the hijacking and cleavage of host capped pre-mRNAs. These short capped RNAs are then used as primers for viral mRNAs. The PB2 subunit is responsible for the binding of the 5' cap of cellular pre-mRNAs which are subsequently cleaved after 10-13 nucleotides by the PA subunit that carries the endonuclease activity.</text>
</comment>
<comment type="cofactor">
    <cofactor evidence="2">
        <name>Mn(2+)</name>
        <dbReference type="ChEBI" id="CHEBI:29035"/>
    </cofactor>
    <text evidence="2">Binds 2 manganese ions per subunit.</text>
</comment>
<comment type="subunit">
    <text evidence="1 2">Influenza RNA polymerase is composed of three subunits: PB1, PB2 and PA. Interacts (via C-terminus) with PB1 (via N-terminus).</text>
</comment>
<comment type="subcellular location">
    <subcellularLocation>
        <location evidence="2">Host cytoplasm</location>
    </subcellularLocation>
    <subcellularLocation>
        <location evidence="2">Host nucleus</location>
    </subcellularLocation>
    <text evidence="1 2">PB1 and PA are transported in the host nucleus as a complex.</text>
</comment>
<comment type="alternative products">
    <event type="ribosomal frameshifting"/>
    <isoform>
        <id>Q0A430-1</id>
        <name>PA</name>
        <sequence type="displayed"/>
    </isoform>
    <isoform>
        <id>P0CK81-1</id>
        <name>PA-X</name>
        <sequence type="external"/>
    </isoform>
</comment>
<comment type="PTM">
    <text evidence="1 2">Phosphorylated on serines and threonines by host kinases, including human casein kinase II.</text>
</comment>
<comment type="similarity">
    <text evidence="2">Belongs to the influenza viruses PA family.</text>
</comment>
<keyword id="KW-1157">Cap snatching</keyword>
<keyword id="KW-0255">Endonuclease</keyword>
<keyword id="KW-1262">Eukaryotic host gene expression shutoff by virus</keyword>
<keyword id="KW-1191">Eukaryotic host transcription shutoff by virus</keyword>
<keyword id="KW-1035">Host cytoplasm</keyword>
<keyword id="KW-1190">Host gene expression shutoff by virus</keyword>
<keyword id="KW-1048">Host nucleus</keyword>
<keyword id="KW-0945">Host-virus interaction</keyword>
<keyword id="KW-0378">Hydrolase</keyword>
<keyword id="KW-1104">Inhibition of host RNA polymerase II by virus</keyword>
<keyword id="KW-0464">Manganese</keyword>
<keyword id="KW-0479">Metal-binding</keyword>
<keyword id="KW-0540">Nuclease</keyword>
<keyword id="KW-0597">Phosphoprotein</keyword>
<keyword id="KW-0688">Ribosomal frameshifting</keyword>
<protein>
    <recommendedName>
        <fullName evidence="2">Polymerase acidic protein</fullName>
        <ecNumber evidence="2">3.1.-.-</ecNumber>
    </recommendedName>
    <alternativeName>
        <fullName evidence="2">RNA-directed RNA polymerase subunit P2</fullName>
    </alternativeName>
</protein>
<gene>
    <name evidence="2" type="primary">PA</name>
</gene>
<reference key="1">
    <citation type="journal article" date="2006" name="Science">
        <title>Large-scale sequence analysis of avian influenza isolates.</title>
        <authorList>
            <person name="Obenauer J.C."/>
            <person name="Denson J."/>
            <person name="Mehta P.K."/>
            <person name="Su X."/>
            <person name="Mukatira S."/>
            <person name="Finkelstein D.B."/>
            <person name="Xu X."/>
            <person name="Wang J."/>
            <person name="Ma J."/>
            <person name="Fan Y."/>
            <person name="Rakestraw K.M."/>
            <person name="Webster R.G."/>
            <person name="Hoffmann E."/>
            <person name="Krauss S."/>
            <person name="Zheng J."/>
            <person name="Zhang Z."/>
            <person name="Naeve C.W."/>
        </authorList>
    </citation>
    <scope>NUCLEOTIDE SEQUENCE [GENOMIC RNA]</scope>
</reference>
<organism>
    <name type="scientific">Influenza A virus (strain A/Duck/England/1/1956 H11N6)</name>
    <dbReference type="NCBI Taxonomy" id="383550"/>
    <lineage>
        <taxon>Viruses</taxon>
        <taxon>Riboviria</taxon>
        <taxon>Orthornavirae</taxon>
        <taxon>Negarnaviricota</taxon>
        <taxon>Polyploviricotina</taxon>
        <taxon>Insthoviricetes</taxon>
        <taxon>Articulavirales</taxon>
        <taxon>Orthomyxoviridae</taxon>
        <taxon>Alphainfluenzavirus</taxon>
        <taxon>Alphainfluenzavirus influenzae</taxon>
        <taxon>Influenza A virus</taxon>
    </lineage>
</organism>